<feature type="chain" id="PRO_1000214824" description="ATP synthase subunit beta">
    <location>
        <begin position="1"/>
        <end position="460"/>
    </location>
</feature>
<feature type="binding site" evidence="1">
    <location>
        <begin position="150"/>
        <end position="157"/>
    </location>
    <ligand>
        <name>ATP</name>
        <dbReference type="ChEBI" id="CHEBI:30616"/>
    </ligand>
</feature>
<sequence length="460" mass="50325">MATGKIVQVIGAVVDVEFPQDAVPRVYDALEVQNGNERLVLEVQQQLGGGIVRTIAMGSSDGLRRGLDVKDLEHPIEVPVGKATLGRIMNVLGEPVDMKGEIGEEERWAIHRAAPSYEELSNSQELLETGIKVIDLMCPFAKGGKVGLFGGAGVGKTVNMMELIRNIAIEHSGYSVFAGVGERTREGNDFYHEMTDSNVIDKVSLVYGQMNEPPGNRLRVALTGLTMAEKFRDEGRDVLLFVDNIYRYTLAGTEVSALLGRMPSAVGYQPTLAEEMGVLQERITSTKTGSITSVQAVYVPADDLTDPSPATTFAHLDATVVLSRQIASLGIYPAVDPLDSTSRQLDPLVVGQEHYDTARGVQSILQRYQELKDIIAILGMDELSEEDKLVVARARKIQRFLSQPFFVAEVFTGSPGKYVSLKDTIRGFKGIMEGEYDHLPEQAFYMVGSIEEAVEKAKKL</sequence>
<proteinExistence type="inferred from homology"/>
<accession>C4ZZ10</accession>
<organism>
    <name type="scientific">Escherichia coli (strain K12 / MC4100 / BW2952)</name>
    <dbReference type="NCBI Taxonomy" id="595496"/>
    <lineage>
        <taxon>Bacteria</taxon>
        <taxon>Pseudomonadati</taxon>
        <taxon>Pseudomonadota</taxon>
        <taxon>Gammaproteobacteria</taxon>
        <taxon>Enterobacterales</taxon>
        <taxon>Enterobacteriaceae</taxon>
        <taxon>Escherichia</taxon>
    </lineage>
</organism>
<reference key="1">
    <citation type="journal article" date="2009" name="J. Bacteriol.">
        <title>Genomic sequencing reveals regulatory mutations and recombinational events in the widely used MC4100 lineage of Escherichia coli K-12.</title>
        <authorList>
            <person name="Ferenci T."/>
            <person name="Zhou Z."/>
            <person name="Betteridge T."/>
            <person name="Ren Y."/>
            <person name="Liu Y."/>
            <person name="Feng L."/>
            <person name="Reeves P.R."/>
            <person name="Wang L."/>
        </authorList>
    </citation>
    <scope>NUCLEOTIDE SEQUENCE [LARGE SCALE GENOMIC DNA]</scope>
    <source>
        <strain>K12 / MC4100 / BW2952</strain>
    </source>
</reference>
<name>ATPB_ECOBW</name>
<dbReference type="EC" id="7.1.2.2" evidence="1"/>
<dbReference type="EMBL" id="CP001396">
    <property type="protein sequence ID" value="ACR63066.1"/>
    <property type="molecule type" value="Genomic_DNA"/>
</dbReference>
<dbReference type="RefSeq" id="WP_000190506.1">
    <property type="nucleotide sequence ID" value="NC_012759.1"/>
</dbReference>
<dbReference type="SMR" id="C4ZZ10"/>
<dbReference type="GeneID" id="93778235"/>
<dbReference type="KEGG" id="ebw:BWG_3423"/>
<dbReference type="HOGENOM" id="CLU_022398_0_2_6"/>
<dbReference type="GO" id="GO:0005886">
    <property type="term" value="C:plasma membrane"/>
    <property type="evidence" value="ECO:0007669"/>
    <property type="project" value="UniProtKB-SubCell"/>
</dbReference>
<dbReference type="GO" id="GO:0045259">
    <property type="term" value="C:proton-transporting ATP synthase complex"/>
    <property type="evidence" value="ECO:0007669"/>
    <property type="project" value="UniProtKB-KW"/>
</dbReference>
<dbReference type="GO" id="GO:0005524">
    <property type="term" value="F:ATP binding"/>
    <property type="evidence" value="ECO:0007669"/>
    <property type="project" value="UniProtKB-UniRule"/>
</dbReference>
<dbReference type="GO" id="GO:0016887">
    <property type="term" value="F:ATP hydrolysis activity"/>
    <property type="evidence" value="ECO:0007669"/>
    <property type="project" value="InterPro"/>
</dbReference>
<dbReference type="GO" id="GO:0046933">
    <property type="term" value="F:proton-transporting ATP synthase activity, rotational mechanism"/>
    <property type="evidence" value="ECO:0007669"/>
    <property type="project" value="UniProtKB-UniRule"/>
</dbReference>
<dbReference type="CDD" id="cd18110">
    <property type="entry name" value="ATP-synt_F1_beta_C"/>
    <property type="match status" value="1"/>
</dbReference>
<dbReference type="CDD" id="cd18115">
    <property type="entry name" value="ATP-synt_F1_beta_N"/>
    <property type="match status" value="1"/>
</dbReference>
<dbReference type="CDD" id="cd01133">
    <property type="entry name" value="F1-ATPase_beta_CD"/>
    <property type="match status" value="1"/>
</dbReference>
<dbReference type="FunFam" id="1.10.1140.10:FF:000001">
    <property type="entry name" value="ATP synthase subunit beta"/>
    <property type="match status" value="1"/>
</dbReference>
<dbReference type="FunFam" id="2.40.10.170:FF:000003">
    <property type="entry name" value="ATP synthase subunit beta"/>
    <property type="match status" value="1"/>
</dbReference>
<dbReference type="FunFam" id="3.40.50.300:FF:000004">
    <property type="entry name" value="ATP synthase subunit beta"/>
    <property type="match status" value="1"/>
</dbReference>
<dbReference type="Gene3D" id="2.40.10.170">
    <property type="match status" value="1"/>
</dbReference>
<dbReference type="Gene3D" id="1.10.1140.10">
    <property type="entry name" value="Bovine Mitochondrial F1-atpase, Atp Synthase Beta Chain, Chain D, domain 3"/>
    <property type="match status" value="1"/>
</dbReference>
<dbReference type="Gene3D" id="3.40.50.300">
    <property type="entry name" value="P-loop containing nucleotide triphosphate hydrolases"/>
    <property type="match status" value="1"/>
</dbReference>
<dbReference type="HAMAP" id="MF_01347">
    <property type="entry name" value="ATP_synth_beta_bact"/>
    <property type="match status" value="1"/>
</dbReference>
<dbReference type="InterPro" id="IPR003593">
    <property type="entry name" value="AAA+_ATPase"/>
</dbReference>
<dbReference type="InterPro" id="IPR055190">
    <property type="entry name" value="ATP-synt_VA_C"/>
</dbReference>
<dbReference type="InterPro" id="IPR005722">
    <property type="entry name" value="ATP_synth_F1_bsu"/>
</dbReference>
<dbReference type="InterPro" id="IPR020003">
    <property type="entry name" value="ATPase_a/bsu_AS"/>
</dbReference>
<dbReference type="InterPro" id="IPR050053">
    <property type="entry name" value="ATPase_alpha/beta_chains"/>
</dbReference>
<dbReference type="InterPro" id="IPR004100">
    <property type="entry name" value="ATPase_F1/V1/A1_a/bsu_N"/>
</dbReference>
<dbReference type="InterPro" id="IPR036121">
    <property type="entry name" value="ATPase_F1/V1/A1_a/bsu_N_sf"/>
</dbReference>
<dbReference type="InterPro" id="IPR000194">
    <property type="entry name" value="ATPase_F1/V1/A1_a/bsu_nucl-bd"/>
</dbReference>
<dbReference type="InterPro" id="IPR024034">
    <property type="entry name" value="ATPase_F1/V1_b/a_C"/>
</dbReference>
<dbReference type="InterPro" id="IPR027417">
    <property type="entry name" value="P-loop_NTPase"/>
</dbReference>
<dbReference type="NCBIfam" id="TIGR01039">
    <property type="entry name" value="atpD"/>
    <property type="match status" value="1"/>
</dbReference>
<dbReference type="PANTHER" id="PTHR15184">
    <property type="entry name" value="ATP SYNTHASE"/>
    <property type="match status" value="1"/>
</dbReference>
<dbReference type="PANTHER" id="PTHR15184:SF71">
    <property type="entry name" value="ATP SYNTHASE SUBUNIT BETA, MITOCHONDRIAL"/>
    <property type="match status" value="1"/>
</dbReference>
<dbReference type="Pfam" id="PF00006">
    <property type="entry name" value="ATP-synt_ab"/>
    <property type="match status" value="1"/>
</dbReference>
<dbReference type="Pfam" id="PF02874">
    <property type="entry name" value="ATP-synt_ab_N"/>
    <property type="match status" value="1"/>
</dbReference>
<dbReference type="Pfam" id="PF22919">
    <property type="entry name" value="ATP-synt_VA_C"/>
    <property type="match status" value="1"/>
</dbReference>
<dbReference type="SMART" id="SM00382">
    <property type="entry name" value="AAA"/>
    <property type="match status" value="1"/>
</dbReference>
<dbReference type="SUPFAM" id="SSF47917">
    <property type="entry name" value="C-terminal domain of alpha and beta subunits of F1 ATP synthase"/>
    <property type="match status" value="1"/>
</dbReference>
<dbReference type="SUPFAM" id="SSF50615">
    <property type="entry name" value="N-terminal domain of alpha and beta subunits of F1 ATP synthase"/>
    <property type="match status" value="1"/>
</dbReference>
<dbReference type="SUPFAM" id="SSF52540">
    <property type="entry name" value="P-loop containing nucleoside triphosphate hydrolases"/>
    <property type="match status" value="1"/>
</dbReference>
<dbReference type="PROSITE" id="PS00152">
    <property type="entry name" value="ATPASE_ALPHA_BETA"/>
    <property type="match status" value="1"/>
</dbReference>
<gene>
    <name evidence="1" type="primary">atpD</name>
    <name type="ordered locus">BWG_3423</name>
</gene>
<evidence type="ECO:0000255" key="1">
    <source>
        <dbReference type="HAMAP-Rule" id="MF_01347"/>
    </source>
</evidence>
<protein>
    <recommendedName>
        <fullName evidence="1">ATP synthase subunit beta</fullName>
        <ecNumber evidence="1">7.1.2.2</ecNumber>
    </recommendedName>
    <alternativeName>
        <fullName evidence="1">ATP synthase F1 sector subunit beta</fullName>
    </alternativeName>
    <alternativeName>
        <fullName evidence="1">F-ATPase subunit beta</fullName>
    </alternativeName>
</protein>
<keyword id="KW-0066">ATP synthesis</keyword>
<keyword id="KW-0067">ATP-binding</keyword>
<keyword id="KW-0997">Cell inner membrane</keyword>
<keyword id="KW-1003">Cell membrane</keyword>
<keyword id="KW-0139">CF(1)</keyword>
<keyword id="KW-0375">Hydrogen ion transport</keyword>
<keyword id="KW-0406">Ion transport</keyword>
<keyword id="KW-0472">Membrane</keyword>
<keyword id="KW-0547">Nucleotide-binding</keyword>
<keyword id="KW-1278">Translocase</keyword>
<keyword id="KW-0813">Transport</keyword>
<comment type="function">
    <text evidence="1">Produces ATP from ADP in the presence of a proton gradient across the membrane. The catalytic sites are hosted primarily by the beta subunits.</text>
</comment>
<comment type="catalytic activity">
    <reaction evidence="1">
        <text>ATP + H2O + 4 H(+)(in) = ADP + phosphate + 5 H(+)(out)</text>
        <dbReference type="Rhea" id="RHEA:57720"/>
        <dbReference type="ChEBI" id="CHEBI:15377"/>
        <dbReference type="ChEBI" id="CHEBI:15378"/>
        <dbReference type="ChEBI" id="CHEBI:30616"/>
        <dbReference type="ChEBI" id="CHEBI:43474"/>
        <dbReference type="ChEBI" id="CHEBI:456216"/>
        <dbReference type="EC" id="7.1.2.2"/>
    </reaction>
</comment>
<comment type="subunit">
    <text evidence="1">F-type ATPases have 2 components, CF(1) - the catalytic core - and CF(0) - the membrane proton channel. CF(1) has five subunits: alpha(3), beta(3), gamma(1), delta(1), epsilon(1). CF(0) has three main subunits: a(1), b(2) and c(9-12). The alpha and beta chains form an alternating ring which encloses part of the gamma chain. CF(1) is attached to CF(0) by a central stalk formed by the gamma and epsilon chains, while a peripheral stalk is formed by the delta and b chains.</text>
</comment>
<comment type="subcellular location">
    <subcellularLocation>
        <location evidence="1">Cell inner membrane</location>
        <topology evidence="1">Peripheral membrane protein</topology>
    </subcellularLocation>
</comment>
<comment type="similarity">
    <text evidence="1">Belongs to the ATPase alpha/beta chains family.</text>
</comment>